<dbReference type="EMBL" id="JN253932">
    <property type="protein sequence ID" value="AEK80745.1"/>
    <property type="molecule type" value="Genomic_DNA"/>
</dbReference>
<dbReference type="EMBL" id="JN253933">
    <property type="protein sequence ID" value="AEK80746.1"/>
    <property type="molecule type" value="Genomic_DNA"/>
</dbReference>
<dbReference type="EMBL" id="JN253934">
    <property type="protein sequence ID" value="AEK80747.1"/>
    <property type="molecule type" value="Genomic_DNA"/>
</dbReference>
<dbReference type="RefSeq" id="XP_009538063.1">
    <property type="nucleotide sequence ID" value="XM_009539768.1"/>
</dbReference>
<dbReference type="PDB" id="5GNC">
    <property type="method" value="X-ray"/>
    <property type="resolution" value="2.80 A"/>
    <property type="chains" value="A=59-670"/>
</dbReference>
<dbReference type="PDB" id="7XVK">
    <property type="method" value="X-ray"/>
    <property type="resolution" value="2.29 A"/>
    <property type="chains" value="B=59-670"/>
</dbReference>
<dbReference type="PDBsum" id="5GNC"/>
<dbReference type="PDBsum" id="7XVK"/>
<dbReference type="SMR" id="E0W4V5"/>
<dbReference type="GlyCosmos" id="E0W4V5">
    <property type="glycosylation" value="1 site, No reported glycans"/>
</dbReference>
<dbReference type="KEGG" id="psoj:PHYSODRAFT_289089"/>
<dbReference type="VEuPathDB" id="FungiDB:PHYSODRAFT_289089"/>
<dbReference type="HOGENOM" id="CLU_021192_3_0_1"/>
<dbReference type="OMA" id="TLYMKTD"/>
<dbReference type="OrthoDB" id="122386at2759"/>
<dbReference type="GO" id="GO:0005576">
    <property type="term" value="C:extracellular region"/>
    <property type="evidence" value="ECO:0007669"/>
    <property type="project" value="UniProtKB-SubCell"/>
</dbReference>
<dbReference type="GO" id="GO:0043657">
    <property type="term" value="C:host cell"/>
    <property type="evidence" value="ECO:0007669"/>
    <property type="project" value="UniProtKB-SubCell"/>
</dbReference>
<dbReference type="InterPro" id="IPR054463">
    <property type="entry name" value="PexRD54_WY"/>
</dbReference>
<dbReference type="Pfam" id="PF22748">
    <property type="entry name" value="PexRD54_WY"/>
    <property type="match status" value="2"/>
</dbReference>
<evidence type="ECO:0000255" key="1"/>
<evidence type="ECO:0000255" key="2">
    <source>
        <dbReference type="PROSITE-ProRule" id="PRU00498"/>
    </source>
</evidence>
<evidence type="ECO:0000269" key="3">
    <source>
    </source>
</evidence>
<evidence type="ECO:0000269" key="4">
    <source>
    </source>
</evidence>
<evidence type="ECO:0000269" key="5">
    <source>
    </source>
</evidence>
<evidence type="ECO:0000269" key="6">
    <source>
    </source>
</evidence>
<evidence type="ECO:0000303" key="7">
    <source>
    </source>
</evidence>
<evidence type="ECO:0000303" key="8">
    <source>
    </source>
</evidence>
<evidence type="ECO:0000305" key="9"/>
<evidence type="ECO:0000305" key="10">
    <source>
    </source>
</evidence>
<evidence type="ECO:0000305" key="11">
    <source>
    </source>
</evidence>
<evidence type="ECO:0000305" key="12">
    <source>
    </source>
</evidence>
<evidence type="ECO:0007744" key="13">
    <source>
        <dbReference type="PDB" id="5GNC"/>
    </source>
</evidence>
<evidence type="ECO:0007829" key="14">
    <source>
        <dbReference type="PDB" id="5GNC"/>
    </source>
</evidence>
<accession>E0W4V5</accession>
<reference key="1">
    <citation type="journal article" date="2011" name="Plant Cell">
        <title>Transcriptional programming and functional interactions within the Phytophthora sojae RXLR effector repertoire.</title>
        <authorList>
            <person name="Wang Q."/>
            <person name="Han C."/>
            <person name="Ferreira A.O."/>
            <person name="Yu X."/>
            <person name="Ye W."/>
            <person name="Tripathy S."/>
            <person name="Kale S.D."/>
            <person name="Gu B."/>
            <person name="Sheng Y."/>
            <person name="Sui Y."/>
            <person name="Wang X."/>
            <person name="Zhang Z."/>
            <person name="Cheng B."/>
            <person name="Dong S."/>
            <person name="Shan W."/>
            <person name="Zheng X."/>
            <person name="Dou D."/>
            <person name="Tyler B.M."/>
            <person name="Wang Y."/>
        </authorList>
    </citation>
    <scope>NUCLEOTIDE SEQUENCE [GENOMIC DNA]</scope>
    <scope>IDENTIFICATION</scope>
    <scope>DOMAIN</scope>
    <source>
        <strain>P7064</strain>
        <strain>P7074</strain>
        <strain>P7076</strain>
    </source>
</reference>
<reference key="2">
    <citation type="journal article" date="2013" name="Nat. Genet.">
        <title>Oomycete pathogens encode RNA silencing suppressors.</title>
        <authorList>
            <person name="Qiao Y."/>
            <person name="Liu L."/>
            <person name="Xiong Q."/>
            <person name="Flores C."/>
            <person name="Wong J."/>
            <person name="Shi J."/>
            <person name="Wang X."/>
            <person name="Liu X."/>
            <person name="Xiang Q."/>
            <person name="Jiang S."/>
            <person name="Zhang F."/>
            <person name="Wang Y."/>
            <person name="Judelson H.S."/>
            <person name="Chen X."/>
            <person name="Ma W."/>
        </authorList>
    </citation>
    <scope>FUNCTION</scope>
    <scope>DISRUPTION PHENOTYPE</scope>
</reference>
<reference key="3">
    <citation type="journal article" date="2014" name="Mol. Plant Microbe Interact.">
        <title>Phytophthora suppressor of RNA silencing 2 is a conserved RxLR effector that promotes infection in soybean and Arabidopsis thaliana.</title>
        <authorList>
            <person name="Xiong Q."/>
            <person name="Ye W."/>
            <person name="Choi D."/>
            <person name="Wong J."/>
            <person name="Qiao Y."/>
            <person name="Tao K."/>
            <person name="Wang Y."/>
            <person name="Ma W."/>
        </authorList>
    </citation>
    <scope>FUNCTION</scope>
    <scope>INDUCTION</scope>
</reference>
<reference key="4">
    <citation type="journal article" date="2019" name="Cell Host Microbe">
        <title>A Phytophthora Effector Suppresses Trans-Kingdom RNAi to Promote Disease Susceptibility.</title>
        <authorList>
            <person name="Hou Y."/>
            <person name="Zhai Y."/>
            <person name="Feng L."/>
            <person name="Karimi H.Z."/>
            <person name="Rutter B.D."/>
            <person name="Zeng L."/>
            <person name="Choi D.S."/>
            <person name="Zhang B."/>
            <person name="Gu W."/>
            <person name="Chen X."/>
            <person name="Ye W."/>
            <person name="Innes R.W."/>
            <person name="Zhai J."/>
            <person name="Ma W."/>
        </authorList>
    </citation>
    <scope>FUNCTION</scope>
    <scope>DOMAIN</scope>
    <scope>INTERACTION WITH HOST DRB4</scope>
</reference>
<reference evidence="13" key="5">
    <citation type="journal article" date="2019" name="Proc. Natl. Acad. Sci. U.S.A.">
        <title>Structural analysis of Phytophthora suppressor of RNA silencing 2 (PSR2) reveals a conserved modular fold contributing to virulence.</title>
        <authorList>
            <person name="He J."/>
            <person name="Ye W."/>
            <person name="Choi D.S."/>
            <person name="Wu B."/>
            <person name="Zhai Y."/>
            <person name="Guo B."/>
            <person name="Duan S."/>
            <person name="Wang Y."/>
            <person name="Gan J."/>
            <person name="Ma W."/>
            <person name="Ma J."/>
        </authorList>
    </citation>
    <scope>X-RAY CRYSTALLOGRAPHY (2.80 ANGSTROMS) OF 59-670</scope>
    <scope>DOMAIN</scope>
    <scope>FUNCTION</scope>
    <scope>MUTAGENESIS OF 79-LYS--ASP-126; 127-SER--ASN-217; 218-PRO--ASN-308; 309-PRO--LYS-399; 400-GLU--ASN-492; 493-PRO--ALA-583 AND 584-PRO--GLY-670</scope>
</reference>
<feature type="signal peptide" evidence="1">
    <location>
        <begin position="1"/>
        <end position="17"/>
    </location>
</feature>
<feature type="chain" id="PRO_5011089660" description="RxLR effector protein PSR2">
    <location>
        <begin position="18"/>
        <end position="670"/>
    </location>
</feature>
<feature type="repeat" description="WY1" evidence="12">
    <location>
        <begin position="79"/>
        <end position="126"/>
    </location>
</feature>
<feature type="repeat" description="LWY2" evidence="12">
    <location>
        <begin position="127"/>
        <end position="217"/>
    </location>
</feature>
<feature type="repeat" description="LWY3" evidence="12">
    <location>
        <begin position="218"/>
        <end position="308"/>
    </location>
</feature>
<feature type="repeat" description="LWY4" evidence="12">
    <location>
        <begin position="309"/>
        <end position="399"/>
    </location>
</feature>
<feature type="repeat" description="LWY5" evidence="12">
    <location>
        <begin position="400"/>
        <end position="492"/>
    </location>
</feature>
<feature type="repeat" description="LWY6" evidence="12">
    <location>
        <begin position="493"/>
        <end position="583"/>
    </location>
</feature>
<feature type="repeat" description="LWY7" evidence="12">
    <location>
        <begin position="584"/>
        <end position="670"/>
    </location>
</feature>
<feature type="region of interest" description="7 X 93 AA tandem repeats" evidence="12">
    <location>
        <begin position="79"/>
        <end position="670"/>
    </location>
</feature>
<feature type="short sequence motif" description="RxLR-dEER" evidence="10">
    <location>
        <begin position="39"/>
        <end position="54"/>
    </location>
</feature>
<feature type="glycosylation site" description="N-linked (GlcNAc...) asparagine" evidence="2">
    <location>
        <position position="57"/>
    </location>
</feature>
<feature type="mutagenesis site" description="In PSR2delta-WY1; reduces the ability to suppress the biogenesis of small RNA in host and virulence activity of the pathogen." evidence="6">
    <location>
        <begin position="79"/>
        <end position="126"/>
    </location>
</feature>
<feature type="mutagenesis site" description="In PSR2delta-LWY2; reduces the ability to suppress the biogenesis of small RNA in host and virulence activity of the pathogen." evidence="6">
    <location>
        <begin position="127"/>
        <end position="217"/>
    </location>
</feature>
<feature type="mutagenesis site" description="In PSR2delta-LWY3; does not Reduce the ability to suppress the biogenesis of small RNA in host and virulence activity of the pathogen." evidence="6">
    <location>
        <begin position="218"/>
        <end position="308"/>
    </location>
</feature>
<feature type="mutagenesis site" description="In PSR2delta-LWY4; does not Reduce the ability to suppress the biogenesis of small RNA in host and virulence activity of the pathogen." evidence="6">
    <location>
        <begin position="309"/>
        <end position="399"/>
    </location>
</feature>
<feature type="mutagenesis site" description="In PSR2delta-LWY5; does not Reduce the ability to suppress the biogenesis of small RNA in host and virulence activity of the pathogen." evidence="6">
    <location>
        <begin position="400"/>
        <end position="492"/>
    </location>
</feature>
<feature type="mutagenesis site" description="In PSR2delta-LWY6; reduces the ability to suppress the biogenesis of small RNA in host and virulence activity of the pathogen." evidence="6">
    <location>
        <begin position="493"/>
        <end position="583"/>
    </location>
</feature>
<feature type="mutagenesis site" description="In PSR2delta-LWY7; does not Reduce the ability to suppress the biogenesis of small RNA in host and virulence activity of the pathogen." evidence="6">
    <location>
        <begin position="584"/>
        <end position="670"/>
    </location>
</feature>
<feature type="helix" evidence="14">
    <location>
        <begin position="77"/>
        <end position="85"/>
    </location>
</feature>
<feature type="helix" evidence="14">
    <location>
        <begin position="90"/>
        <end position="96"/>
    </location>
</feature>
<feature type="helix" evidence="14">
    <location>
        <begin position="103"/>
        <end position="106"/>
    </location>
</feature>
<feature type="helix" evidence="14">
    <location>
        <begin position="112"/>
        <end position="122"/>
    </location>
</feature>
<feature type="strand" evidence="14">
    <location>
        <begin position="123"/>
        <end position="125"/>
    </location>
</feature>
<feature type="helix" evidence="14">
    <location>
        <begin position="126"/>
        <end position="140"/>
    </location>
</feature>
<feature type="helix" evidence="14">
    <location>
        <begin position="143"/>
        <end position="155"/>
    </location>
</feature>
<feature type="helix" evidence="14">
    <location>
        <begin position="160"/>
        <end position="176"/>
    </location>
</feature>
<feature type="helix" evidence="14">
    <location>
        <begin position="181"/>
        <end position="187"/>
    </location>
</feature>
<feature type="turn" evidence="14">
    <location>
        <begin position="188"/>
        <end position="192"/>
    </location>
</feature>
<feature type="helix" evidence="14">
    <location>
        <begin position="194"/>
        <end position="199"/>
    </location>
</feature>
<feature type="helix" evidence="14">
    <location>
        <begin position="202"/>
        <end position="216"/>
    </location>
</feature>
<feature type="helix" evidence="14">
    <location>
        <begin position="224"/>
        <end position="232"/>
    </location>
</feature>
<feature type="helix" evidence="14">
    <location>
        <begin position="234"/>
        <end position="246"/>
    </location>
</feature>
<feature type="turn" evidence="14">
    <location>
        <begin position="248"/>
        <end position="250"/>
    </location>
</feature>
<feature type="helix" evidence="14">
    <location>
        <begin position="251"/>
        <end position="267"/>
    </location>
</feature>
<feature type="helix" evidence="14">
    <location>
        <begin position="272"/>
        <end position="278"/>
    </location>
</feature>
<feature type="helix" evidence="14">
    <location>
        <begin position="285"/>
        <end position="287"/>
    </location>
</feature>
<feature type="turn" evidence="14">
    <location>
        <begin position="288"/>
        <end position="290"/>
    </location>
</feature>
<feature type="helix" evidence="14">
    <location>
        <begin position="292"/>
        <end position="307"/>
    </location>
</feature>
<feature type="helix" evidence="14">
    <location>
        <begin position="315"/>
        <end position="319"/>
    </location>
</feature>
<feature type="turn" evidence="14">
    <location>
        <begin position="320"/>
        <end position="322"/>
    </location>
</feature>
<feature type="helix" evidence="14">
    <location>
        <begin position="325"/>
        <end position="337"/>
    </location>
</feature>
<feature type="helix" evidence="14">
    <location>
        <begin position="339"/>
        <end position="341"/>
    </location>
</feature>
<feature type="helix" evidence="14">
    <location>
        <begin position="342"/>
        <end position="359"/>
    </location>
</feature>
<feature type="helix" evidence="14">
    <location>
        <begin position="363"/>
        <end position="369"/>
    </location>
</feature>
<feature type="helix" evidence="14">
    <location>
        <begin position="372"/>
        <end position="374"/>
    </location>
</feature>
<feature type="helix" evidence="14">
    <location>
        <begin position="376"/>
        <end position="381"/>
    </location>
</feature>
<feature type="helix" evidence="14">
    <location>
        <begin position="385"/>
        <end position="394"/>
    </location>
</feature>
<feature type="turn" evidence="14">
    <location>
        <begin position="400"/>
        <end position="402"/>
    </location>
</feature>
<feature type="helix" evidence="14">
    <location>
        <begin position="407"/>
        <end position="414"/>
    </location>
</feature>
<feature type="helix" evidence="14">
    <location>
        <begin position="419"/>
        <end position="430"/>
    </location>
</feature>
<feature type="helix" evidence="14">
    <location>
        <begin position="432"/>
        <end position="434"/>
    </location>
</feature>
<feature type="helix" evidence="14">
    <location>
        <begin position="435"/>
        <end position="451"/>
    </location>
</feature>
<feature type="helix" evidence="14">
    <location>
        <begin position="456"/>
        <end position="462"/>
    </location>
</feature>
<feature type="helix" evidence="14">
    <location>
        <begin position="465"/>
        <end position="467"/>
    </location>
</feature>
<feature type="helix" evidence="14">
    <location>
        <begin position="469"/>
        <end position="474"/>
    </location>
</feature>
<feature type="helix" evidence="14">
    <location>
        <begin position="477"/>
        <end position="489"/>
    </location>
</feature>
<feature type="helix" evidence="14">
    <location>
        <begin position="500"/>
        <end position="506"/>
    </location>
</feature>
<feature type="helix" evidence="14">
    <location>
        <begin position="510"/>
        <end position="521"/>
    </location>
</feature>
<feature type="helix" evidence="14">
    <location>
        <begin position="523"/>
        <end position="542"/>
    </location>
</feature>
<feature type="helix" evidence="14">
    <location>
        <begin position="547"/>
        <end position="553"/>
    </location>
</feature>
<feature type="turn" evidence="14">
    <location>
        <begin position="554"/>
        <end position="557"/>
    </location>
</feature>
<feature type="turn" evidence="14">
    <location>
        <begin position="561"/>
        <end position="565"/>
    </location>
</feature>
<feature type="helix" evidence="14">
    <location>
        <begin position="567"/>
        <end position="581"/>
    </location>
</feature>
<feature type="helix" evidence="14">
    <location>
        <begin position="590"/>
        <end position="598"/>
    </location>
</feature>
<feature type="helix" evidence="14">
    <location>
        <begin position="600"/>
        <end position="611"/>
    </location>
</feature>
<feature type="turn" evidence="14">
    <location>
        <begin position="614"/>
        <end position="616"/>
    </location>
</feature>
<feature type="helix" evidence="14">
    <location>
        <begin position="617"/>
        <end position="633"/>
    </location>
</feature>
<feature type="helix" evidence="14">
    <location>
        <begin position="638"/>
        <end position="645"/>
    </location>
</feature>
<feature type="turn" evidence="14">
    <location>
        <begin position="646"/>
        <end position="648"/>
    </location>
</feature>
<feature type="helix" evidence="14">
    <location>
        <begin position="651"/>
        <end position="669"/>
    </location>
</feature>
<sequence length="670" mass="74613">MRLQCVVLFAALTLVAATHAPPNVKTVLSAEQHDIPVKRLLRPGNPAGKEDEERGINFSSVPGFEKLANLLKPKPGLKKLLKWADAKKPPETVFTRLRLDKTGTQLFDNTDFPVWAAYTRSVAQTDSEASAVMLKTLVSRYSDEVLSGMIAAAKKSSKTESIATKLETEQMRTWLAAKKTPDDMFLVFKLNKAGDDILSSPLLSAWTNYMKLSNKENPKAQTTLIATMTKHYGDSGVSQILAAARKSPATQSTAKRLEAEQVQLWLKKGRTPDDTFTLLSLDRAGDDLLASPQFNTWMKYINYYNKENPDEKTTVLAKLMTHFDDEELTPILVVARKVPSTESTAAKLQAEQFKNWLSADKSPEEAFTLLQLDKAGDDLLTNPQLTNWLKYTENFNLNKEINEQVTAIQVFRAQYVDDSRIANMVIAAEKVPNTQAIAKRVEDELFKGWTVVLNKPDDVFINLKLETVGENVFESPLWSFYTKFLEKYNTANPGKEQTMISGLARGYNDVTLTNMLLKAKEAPSTKTLATKLEDELVQYWLADKKLPDKLFGYLELKESVDGILTNPVFNVWLKYLNAFNDKAPVKKALMIDTLKSAFGDVAVSNMLFAAKKDPGTAKVAATLQTALLSKWVLEKKTPGQVSAILKEGAGADVSAKLLATYSAKFKVRWG</sequence>
<comment type="function">
    <text evidence="3 4 5">Secreted effector that possesses RNA silencing suppression activity by inhibiting the biogenesis of small RNAs in the host plant to promote enhanced susceptibility of host to the pathogen during infection (PubMed:23377181, PubMed:25387135, PubMed:30595554). Interferes with secondary siRNA production by associating with host dsRNA-binding protein DRB4 (PubMed:30595554). Inhibits the host salicylic acid pathway during infection (PubMed:25387135).</text>
</comment>
<comment type="subunit">
    <text evidence="5">Interacts with host dsRNA-binding protein DRB4.</text>
</comment>
<comment type="subcellular location">
    <subcellularLocation>
        <location evidence="11">Secreted</location>
    </subcellularLocation>
    <subcellularLocation>
        <location evidence="11">Host cell</location>
    </subcellularLocation>
</comment>
<comment type="induction">
    <text evidence="4">Expressed at specific infection stages in a transient manner (PubMed:25387135). Is not expressed until 24 hours post-infection (hpi) but quickly reaches the maximum expression level at approximately 36 hpi (PubMed:25387135). The abundance of transcripts exhibits a more than twofold decrease at 48 hpi (PubMed:25387135).</text>
</comment>
<comment type="domain">
    <text evidence="10">The RxLR-dEER motif acts to carry the protein into the host cell cytoplasm through binding to cell surface phosphatidylinositol-3-phosphate.</text>
</comment>
<comment type="domain">
    <text evidence="5 6 12">The C-terminal region (residues 79 to 670) consists of seven imperfect tandem repeats, including one W-Y motif (WY1) and six L-W-Y motifs (LWY2 to LWY7) (Probable). WY1 forms a 3 alpha-helix fold with one hydrophobic core and each L-W-Y motif forms a highly conserved fold consisting of 5 alpha-helices (Probable). The units contribute differently to the virulence since WY1, LWY2 and LWY6 are important for the ability to suppress the biogenesis of small RNA in host and virulence activity of the pathogen, whereas LWY3, LWY4, LWY5 and LWY7 are dispensable for PSR2 function (PubMed:30926664). WY1 and LWY2 are sufficient for association with DRB4, suppress gene silencing and promote infection (PubMed:30595554). These units may function as basic building blocks of Phytophthora effectors to enable virulence activity and accelerate the evolution of novel functions (Probable).</text>
</comment>
<comment type="disruption phenotype">
    <text evidence="3">Exhibits significantly decreased virulence when infecting soybean seedlings.</text>
</comment>
<comment type="similarity">
    <text evidence="9">Belongs to the RxLR effector family.</text>
</comment>
<organism>
    <name type="scientific">Phytophthora sojae</name>
    <name type="common">Soybean stem and root rot agent</name>
    <name type="synonym">Phytophthora megasperma f. sp. glycines</name>
    <dbReference type="NCBI Taxonomy" id="67593"/>
    <lineage>
        <taxon>Eukaryota</taxon>
        <taxon>Sar</taxon>
        <taxon>Stramenopiles</taxon>
        <taxon>Oomycota</taxon>
        <taxon>Peronosporales</taxon>
        <taxon>Peronosporaceae</taxon>
        <taxon>Phytophthora</taxon>
    </lineage>
</organism>
<name>PSR2_PHYSO</name>
<proteinExistence type="evidence at protein level"/>
<gene>
    <name evidence="8" type="primary">PSR2</name>
    <name evidence="7" type="synonym">Avh146</name>
</gene>
<protein>
    <recommendedName>
        <fullName evidence="7">RxLR effector protein PSR2</fullName>
    </recommendedName>
    <alternativeName>
        <fullName evidence="7">Avirulence homolog protein 146</fullName>
    </alternativeName>
    <alternativeName>
        <fullName evidence="8">Suppressor of RNA silencing protein 2</fullName>
    </alternativeName>
</protein>
<keyword id="KW-0002">3D-structure</keyword>
<keyword id="KW-0325">Glycoprotein</keyword>
<keyword id="KW-0677">Repeat</keyword>
<keyword id="KW-0964">Secreted</keyword>
<keyword id="KW-0732">Signal</keyword>
<keyword id="KW-0843">Virulence</keyword>